<comment type="function">
    <text evidence="1">Catalyzes the radical-mediated insertion of two sulfur atoms into the C-6 and C-8 positions of the octanoyl moiety bound to the lipoyl domains of lipoate-dependent enzymes, thereby converting the octanoylated domains into lipoylated derivatives.</text>
</comment>
<comment type="catalytic activity">
    <reaction evidence="1">
        <text>[[Fe-S] cluster scaffold protein carrying a second [4Fe-4S](2+) cluster] + N(6)-octanoyl-L-lysyl-[protein] + 2 oxidized [2Fe-2S]-[ferredoxin] + 2 S-adenosyl-L-methionine + 4 H(+) = [[Fe-S] cluster scaffold protein] + N(6)-[(R)-dihydrolipoyl]-L-lysyl-[protein] + 4 Fe(3+) + 2 hydrogen sulfide + 2 5'-deoxyadenosine + 2 L-methionine + 2 reduced [2Fe-2S]-[ferredoxin]</text>
        <dbReference type="Rhea" id="RHEA:16585"/>
        <dbReference type="Rhea" id="RHEA-COMP:9928"/>
        <dbReference type="Rhea" id="RHEA-COMP:10000"/>
        <dbReference type="Rhea" id="RHEA-COMP:10001"/>
        <dbReference type="Rhea" id="RHEA-COMP:10475"/>
        <dbReference type="Rhea" id="RHEA-COMP:14568"/>
        <dbReference type="Rhea" id="RHEA-COMP:14569"/>
        <dbReference type="ChEBI" id="CHEBI:15378"/>
        <dbReference type="ChEBI" id="CHEBI:17319"/>
        <dbReference type="ChEBI" id="CHEBI:29034"/>
        <dbReference type="ChEBI" id="CHEBI:29919"/>
        <dbReference type="ChEBI" id="CHEBI:33722"/>
        <dbReference type="ChEBI" id="CHEBI:33737"/>
        <dbReference type="ChEBI" id="CHEBI:33738"/>
        <dbReference type="ChEBI" id="CHEBI:57844"/>
        <dbReference type="ChEBI" id="CHEBI:59789"/>
        <dbReference type="ChEBI" id="CHEBI:78809"/>
        <dbReference type="ChEBI" id="CHEBI:83100"/>
        <dbReference type="EC" id="2.8.1.8"/>
    </reaction>
</comment>
<comment type="cofactor">
    <cofactor evidence="1">
        <name>[4Fe-4S] cluster</name>
        <dbReference type="ChEBI" id="CHEBI:49883"/>
    </cofactor>
    <text evidence="1">Binds 2 [4Fe-4S] clusters per subunit. One cluster is coordinated with 3 cysteines and an exchangeable S-adenosyl-L-methionine.</text>
</comment>
<comment type="pathway">
    <text evidence="1">Protein modification; protein lipoylation via endogenous pathway; protein N(6)-(lipoyl)lysine from octanoyl-[acyl-carrier-protein]: step 2/2.</text>
</comment>
<comment type="subcellular location">
    <subcellularLocation>
        <location evidence="1">Cytoplasm</location>
    </subcellularLocation>
</comment>
<comment type="similarity">
    <text evidence="1">Belongs to the radical SAM superfamily. Lipoyl synthase family.</text>
</comment>
<name>LIPA_CERS1</name>
<keyword id="KW-0004">4Fe-4S</keyword>
<keyword id="KW-0963">Cytoplasm</keyword>
<keyword id="KW-0408">Iron</keyword>
<keyword id="KW-0411">Iron-sulfur</keyword>
<keyword id="KW-0479">Metal-binding</keyword>
<keyword id="KW-0949">S-adenosyl-L-methionine</keyword>
<keyword id="KW-0808">Transferase</keyword>
<accession>A3PJL9</accession>
<evidence type="ECO:0000255" key="1">
    <source>
        <dbReference type="HAMAP-Rule" id="MF_00206"/>
    </source>
</evidence>
<evidence type="ECO:0000255" key="2">
    <source>
        <dbReference type="PROSITE-ProRule" id="PRU01266"/>
    </source>
</evidence>
<evidence type="ECO:0000256" key="3">
    <source>
        <dbReference type="SAM" id="MobiDB-lite"/>
    </source>
</evidence>
<gene>
    <name evidence="1" type="primary">lipA</name>
    <name type="ordered locus">Rsph17029_1425</name>
</gene>
<proteinExistence type="inferred from homology"/>
<dbReference type="EC" id="2.8.1.8" evidence="1"/>
<dbReference type="EMBL" id="CP000577">
    <property type="protein sequence ID" value="ABN76535.1"/>
    <property type="molecule type" value="Genomic_DNA"/>
</dbReference>
<dbReference type="RefSeq" id="WP_002719936.1">
    <property type="nucleotide sequence ID" value="NC_009049.1"/>
</dbReference>
<dbReference type="SMR" id="A3PJL9"/>
<dbReference type="GeneID" id="67446519"/>
<dbReference type="KEGG" id="rsh:Rsph17029_1425"/>
<dbReference type="HOGENOM" id="CLU_033144_2_1_5"/>
<dbReference type="UniPathway" id="UPA00538">
    <property type="reaction ID" value="UER00593"/>
</dbReference>
<dbReference type="GO" id="GO:0005737">
    <property type="term" value="C:cytoplasm"/>
    <property type="evidence" value="ECO:0007669"/>
    <property type="project" value="UniProtKB-SubCell"/>
</dbReference>
<dbReference type="GO" id="GO:0051539">
    <property type="term" value="F:4 iron, 4 sulfur cluster binding"/>
    <property type="evidence" value="ECO:0007669"/>
    <property type="project" value="UniProtKB-UniRule"/>
</dbReference>
<dbReference type="GO" id="GO:0016992">
    <property type="term" value="F:lipoate synthase activity"/>
    <property type="evidence" value="ECO:0007669"/>
    <property type="project" value="UniProtKB-UniRule"/>
</dbReference>
<dbReference type="GO" id="GO:0046872">
    <property type="term" value="F:metal ion binding"/>
    <property type="evidence" value="ECO:0007669"/>
    <property type="project" value="UniProtKB-KW"/>
</dbReference>
<dbReference type="FunFam" id="3.20.20.70:FF:000040">
    <property type="entry name" value="Lipoyl synthase"/>
    <property type="match status" value="1"/>
</dbReference>
<dbReference type="Gene3D" id="3.20.20.70">
    <property type="entry name" value="Aldolase class I"/>
    <property type="match status" value="1"/>
</dbReference>
<dbReference type="HAMAP" id="MF_00206">
    <property type="entry name" value="Lipoyl_synth"/>
    <property type="match status" value="1"/>
</dbReference>
<dbReference type="InterPro" id="IPR013785">
    <property type="entry name" value="Aldolase_TIM"/>
</dbReference>
<dbReference type="InterPro" id="IPR006638">
    <property type="entry name" value="Elp3/MiaA/NifB-like_rSAM"/>
</dbReference>
<dbReference type="InterPro" id="IPR031691">
    <property type="entry name" value="LIAS_N"/>
</dbReference>
<dbReference type="InterPro" id="IPR003698">
    <property type="entry name" value="Lipoyl_synth"/>
</dbReference>
<dbReference type="InterPro" id="IPR007197">
    <property type="entry name" value="rSAM"/>
</dbReference>
<dbReference type="NCBIfam" id="TIGR00510">
    <property type="entry name" value="lipA"/>
    <property type="match status" value="1"/>
</dbReference>
<dbReference type="NCBIfam" id="NF004019">
    <property type="entry name" value="PRK05481.1"/>
    <property type="match status" value="1"/>
</dbReference>
<dbReference type="NCBIfam" id="NF009544">
    <property type="entry name" value="PRK12928.1"/>
    <property type="match status" value="1"/>
</dbReference>
<dbReference type="PANTHER" id="PTHR10949">
    <property type="entry name" value="LIPOYL SYNTHASE"/>
    <property type="match status" value="1"/>
</dbReference>
<dbReference type="PANTHER" id="PTHR10949:SF0">
    <property type="entry name" value="LIPOYL SYNTHASE, MITOCHONDRIAL"/>
    <property type="match status" value="1"/>
</dbReference>
<dbReference type="Pfam" id="PF16881">
    <property type="entry name" value="LIAS_N"/>
    <property type="match status" value="1"/>
</dbReference>
<dbReference type="Pfam" id="PF04055">
    <property type="entry name" value="Radical_SAM"/>
    <property type="match status" value="1"/>
</dbReference>
<dbReference type="PIRSF" id="PIRSF005963">
    <property type="entry name" value="Lipoyl_synth"/>
    <property type="match status" value="1"/>
</dbReference>
<dbReference type="SFLD" id="SFLDF00271">
    <property type="entry name" value="lipoyl_synthase"/>
    <property type="match status" value="1"/>
</dbReference>
<dbReference type="SFLD" id="SFLDG01058">
    <property type="entry name" value="lipoyl_synthase_like"/>
    <property type="match status" value="1"/>
</dbReference>
<dbReference type="SMART" id="SM00729">
    <property type="entry name" value="Elp3"/>
    <property type="match status" value="1"/>
</dbReference>
<dbReference type="SUPFAM" id="SSF102114">
    <property type="entry name" value="Radical SAM enzymes"/>
    <property type="match status" value="1"/>
</dbReference>
<dbReference type="PROSITE" id="PS51918">
    <property type="entry name" value="RADICAL_SAM"/>
    <property type="match status" value="1"/>
</dbReference>
<feature type="chain" id="PRO_0000325303" description="Lipoyl synthase">
    <location>
        <begin position="1"/>
        <end position="320"/>
    </location>
</feature>
<feature type="domain" description="Radical SAM core" evidence="2">
    <location>
        <begin position="72"/>
        <end position="289"/>
    </location>
</feature>
<feature type="region of interest" description="Disordered" evidence="3">
    <location>
        <begin position="1"/>
        <end position="30"/>
    </location>
</feature>
<feature type="compositionally biased region" description="Basic and acidic residues" evidence="3">
    <location>
        <begin position="1"/>
        <end position="24"/>
    </location>
</feature>
<feature type="binding site" evidence="1">
    <location>
        <position position="60"/>
    </location>
    <ligand>
        <name>[4Fe-4S] cluster</name>
        <dbReference type="ChEBI" id="CHEBI:49883"/>
        <label>1</label>
    </ligand>
</feature>
<feature type="binding site" evidence="1">
    <location>
        <position position="65"/>
    </location>
    <ligand>
        <name>[4Fe-4S] cluster</name>
        <dbReference type="ChEBI" id="CHEBI:49883"/>
        <label>1</label>
    </ligand>
</feature>
<feature type="binding site" evidence="1">
    <location>
        <position position="71"/>
    </location>
    <ligand>
        <name>[4Fe-4S] cluster</name>
        <dbReference type="ChEBI" id="CHEBI:49883"/>
        <label>1</label>
    </ligand>
</feature>
<feature type="binding site" evidence="1">
    <location>
        <position position="86"/>
    </location>
    <ligand>
        <name>[4Fe-4S] cluster</name>
        <dbReference type="ChEBI" id="CHEBI:49883"/>
        <label>2</label>
        <note>4Fe-4S-S-AdoMet</note>
    </ligand>
</feature>
<feature type="binding site" evidence="1">
    <location>
        <position position="90"/>
    </location>
    <ligand>
        <name>[4Fe-4S] cluster</name>
        <dbReference type="ChEBI" id="CHEBI:49883"/>
        <label>2</label>
        <note>4Fe-4S-S-AdoMet</note>
    </ligand>
</feature>
<feature type="binding site" evidence="1">
    <location>
        <position position="93"/>
    </location>
    <ligand>
        <name>[4Fe-4S] cluster</name>
        <dbReference type="ChEBI" id="CHEBI:49883"/>
        <label>2</label>
        <note>4Fe-4S-S-AdoMet</note>
    </ligand>
</feature>
<feature type="binding site" evidence="1">
    <location>
        <position position="300"/>
    </location>
    <ligand>
        <name>[4Fe-4S] cluster</name>
        <dbReference type="ChEBI" id="CHEBI:49883"/>
        <label>1</label>
    </ligand>
</feature>
<organism>
    <name type="scientific">Cereibacter sphaeroides (strain ATCC 17029 / ATH 2.4.9)</name>
    <name type="common">Rhodobacter sphaeroides</name>
    <dbReference type="NCBI Taxonomy" id="349101"/>
    <lineage>
        <taxon>Bacteria</taxon>
        <taxon>Pseudomonadati</taxon>
        <taxon>Pseudomonadota</taxon>
        <taxon>Alphaproteobacteria</taxon>
        <taxon>Rhodobacterales</taxon>
        <taxon>Paracoccaceae</taxon>
        <taxon>Cereibacter</taxon>
    </lineage>
</organism>
<reference key="1">
    <citation type="submission" date="2007-02" db="EMBL/GenBank/DDBJ databases">
        <title>Complete sequence of chromosome 1 of Rhodobacter sphaeroides ATCC 17029.</title>
        <authorList>
            <person name="Copeland A."/>
            <person name="Lucas S."/>
            <person name="Lapidus A."/>
            <person name="Barry K."/>
            <person name="Detter J.C."/>
            <person name="Glavina del Rio T."/>
            <person name="Hammon N."/>
            <person name="Israni S."/>
            <person name="Dalin E."/>
            <person name="Tice H."/>
            <person name="Pitluck S."/>
            <person name="Kiss H."/>
            <person name="Brettin T."/>
            <person name="Bruce D."/>
            <person name="Han C."/>
            <person name="Tapia R."/>
            <person name="Gilna P."/>
            <person name="Schmutz J."/>
            <person name="Larimer F."/>
            <person name="Land M."/>
            <person name="Hauser L."/>
            <person name="Kyrpides N."/>
            <person name="Mikhailova N."/>
            <person name="Richardson P."/>
            <person name="Mackenzie C."/>
            <person name="Choudhary M."/>
            <person name="Donohue T.J."/>
            <person name="Kaplan S."/>
        </authorList>
    </citation>
    <scope>NUCLEOTIDE SEQUENCE [LARGE SCALE GENOMIC DNA]</scope>
    <source>
        <strain>ATCC 17029 / ATH 2.4.9</strain>
    </source>
</reference>
<sequence length="320" mass="35492">MIGKLVRDLKIPDQRHPEKAHRPDNVQPKKPSWIRVKAPTSEGYKETRDIIRGQKLATVCEEAGCPNVGECWSQGHATMMIMGEICTRGCSFCNVATGRPQALDAFEPGRVAHAVSQLGLKHVVVTSVDRDDLEDGGAEHFAQTIRAIRHRAPATTIEVLVPDFLKCGPSALETVVAARPDVFNHNLETVPGLYPEVRPGARYFHSLRLLQRAKELDPSIFTKSGIMVGLGEDRQGVLQVMDDMRSAEVDFLTIGQYLQPTPKHHRVDRFVTPEEFAGYEKAAYGKGFLMVSATPLTRSSYHAGDDFARLRDARQKRLGA</sequence>
<protein>
    <recommendedName>
        <fullName evidence="1">Lipoyl synthase</fullName>
        <ecNumber evidence="1">2.8.1.8</ecNumber>
    </recommendedName>
    <alternativeName>
        <fullName evidence="1">Lip-syn</fullName>
        <shortName evidence="1">LS</shortName>
    </alternativeName>
    <alternativeName>
        <fullName evidence="1">Lipoate synthase</fullName>
    </alternativeName>
    <alternativeName>
        <fullName evidence="1">Lipoic acid synthase</fullName>
    </alternativeName>
    <alternativeName>
        <fullName evidence="1">Sulfur insertion protein LipA</fullName>
    </alternativeName>
</protein>